<organism>
    <name type="scientific">Escherichia coli (strain K12)</name>
    <dbReference type="NCBI Taxonomy" id="83333"/>
    <lineage>
        <taxon>Bacteria</taxon>
        <taxon>Pseudomonadati</taxon>
        <taxon>Pseudomonadota</taxon>
        <taxon>Gammaproteobacteria</taxon>
        <taxon>Enterobacterales</taxon>
        <taxon>Enterobacteriaceae</taxon>
        <taxon>Escherichia</taxon>
    </lineage>
</organism>
<dbReference type="EMBL" id="U00096">
    <property type="protein sequence ID" value="AYC08192.1"/>
    <property type="molecule type" value="Genomic_DNA"/>
</dbReference>
<dbReference type="EMBL" id="AP009048">
    <property type="protein sequence ID" value="BAA35975.1"/>
    <property type="molecule type" value="Genomic_DNA"/>
</dbReference>
<dbReference type="PIR" id="B64860">
    <property type="entry name" value="B64860"/>
</dbReference>
<dbReference type="SMR" id="P75978"/>
<dbReference type="BioGRID" id="4261568">
    <property type="interactions" value="6"/>
</dbReference>
<dbReference type="DIP" id="DIP-12724N"/>
<dbReference type="FunCoup" id="P75978">
    <property type="interactions" value="14"/>
</dbReference>
<dbReference type="IntAct" id="P75978">
    <property type="interactions" value="1"/>
</dbReference>
<dbReference type="EnsemblBacteria" id="AYC08192">
    <property type="protein sequence ID" value="AYC08192"/>
    <property type="gene ID" value="b1149"/>
</dbReference>
<dbReference type="KEGG" id="ecj:JW1135"/>
<dbReference type="PATRIC" id="fig|83333.103.peg.1937"/>
<dbReference type="EchoBASE" id="EB4000"/>
<dbReference type="eggNOG" id="COG1802">
    <property type="taxonomic scope" value="Bacteria"/>
</dbReference>
<dbReference type="eggNOG" id="COG4626">
    <property type="taxonomic scope" value="Bacteria"/>
</dbReference>
<dbReference type="HOGENOM" id="CLU_026632_6_1_6"/>
<dbReference type="InParanoid" id="P75978"/>
<dbReference type="PhylomeDB" id="P75978"/>
<dbReference type="BioCyc" id="EcoCyc:G6593-MONOMER"/>
<dbReference type="PRO" id="PR:P75978"/>
<dbReference type="Proteomes" id="UP000000625">
    <property type="component" value="Chromosome"/>
</dbReference>
<dbReference type="GO" id="GO:0004519">
    <property type="term" value="F:endonuclease activity"/>
    <property type="evidence" value="ECO:0007669"/>
    <property type="project" value="InterPro"/>
</dbReference>
<dbReference type="Gene3D" id="1.10.10.10">
    <property type="entry name" value="Winged helix-like DNA-binding domain superfamily/Winged helix DNA-binding domain"/>
    <property type="match status" value="1"/>
</dbReference>
<dbReference type="InterPro" id="IPR046461">
    <property type="entry name" value="TerL_ATPase"/>
</dbReference>
<dbReference type="InterPro" id="IPR046462">
    <property type="entry name" value="TerL_nuclease"/>
</dbReference>
<dbReference type="InterPro" id="IPR005021">
    <property type="entry name" value="Terminase_largesu-like"/>
</dbReference>
<dbReference type="InterPro" id="IPR036388">
    <property type="entry name" value="WH-like_DNA-bd_sf"/>
</dbReference>
<dbReference type="InterPro" id="IPR036390">
    <property type="entry name" value="WH_DNA-bd_sf"/>
</dbReference>
<dbReference type="PANTHER" id="PTHR41287">
    <property type="match status" value="1"/>
</dbReference>
<dbReference type="PANTHER" id="PTHR41287:SF1">
    <property type="entry name" value="PROTEIN YMFN"/>
    <property type="match status" value="1"/>
</dbReference>
<dbReference type="Pfam" id="PF13730">
    <property type="entry name" value="HTH_36"/>
    <property type="match status" value="1"/>
</dbReference>
<dbReference type="Pfam" id="PF03354">
    <property type="entry name" value="TerL_ATPase"/>
    <property type="match status" value="1"/>
</dbReference>
<dbReference type="Pfam" id="PF20441">
    <property type="entry name" value="TerL_nuclease"/>
    <property type="match status" value="1"/>
</dbReference>
<dbReference type="SUPFAM" id="SSF46785">
    <property type="entry name" value="Winged helix' DNA-binding domain"/>
    <property type="match status" value="1"/>
</dbReference>
<sequence>MSTKLTGYVWDGCAASGMKLSSVAIMARLADFSNDEGVCWPSIETIARQIGAGMSTVRTAIARLEAEGWLTRKARRQGDGSSPHCAVVDEYHEHATDALYTTMLTGMGARRQPLMWAITTAGYNIEGPCYDKRREVIEMLNGSVPNDELFGIIYTVDEGDDWTDPQVLEKANPNIGVSVYREFLLSQQQRAKNNARLANVFKTKHLNIWASARSAYFNLVSWQSCEDKSLTLEQFEGQPCILAFDLARKLDMNSMARLYTREIDGKTHYYSVAPRFWVPYDTVYSVEKNEDRRTAERFQKWVEMGVLTVTDGAEVDYRYILEEAKAANKISPVSESPIDPFGATGLSHDLADEDLNPVTIIQNYTNMSDPMKELEAAIESGRFHHDGNPIMTWCIGNVVGKTIPGNDDVVKPVKEQAENKIDGAVALIMAVGRAMLYEKEDTLSDHIESYGIRSL</sequence>
<feature type="chain" id="PRO_0000168847" description="Protein YmfN">
    <location>
        <begin position="1"/>
        <end position="455"/>
    </location>
</feature>
<keyword id="KW-1185">Reference proteome</keyword>
<reference key="1">
    <citation type="journal article" date="1996" name="DNA Res.">
        <title>A 718-kb DNA sequence of the Escherichia coli K-12 genome corresponding to the 12.7-28.0 min region on the linkage map.</title>
        <authorList>
            <person name="Oshima T."/>
            <person name="Aiba H."/>
            <person name="Baba T."/>
            <person name="Fujita K."/>
            <person name="Hayashi K."/>
            <person name="Honjo A."/>
            <person name="Ikemoto K."/>
            <person name="Inada T."/>
            <person name="Itoh T."/>
            <person name="Kajihara M."/>
            <person name="Kanai K."/>
            <person name="Kashimoto K."/>
            <person name="Kimura S."/>
            <person name="Kitagawa M."/>
            <person name="Makino K."/>
            <person name="Masuda S."/>
            <person name="Miki T."/>
            <person name="Mizobuchi K."/>
            <person name="Mori H."/>
            <person name="Motomura K."/>
            <person name="Nakamura Y."/>
            <person name="Nashimoto H."/>
            <person name="Nishio Y."/>
            <person name="Saito N."/>
            <person name="Sampei G."/>
            <person name="Seki Y."/>
            <person name="Tagami H."/>
            <person name="Takemoto K."/>
            <person name="Wada C."/>
            <person name="Yamamoto Y."/>
            <person name="Yano M."/>
            <person name="Horiuchi T."/>
        </authorList>
    </citation>
    <scope>NUCLEOTIDE SEQUENCE [LARGE SCALE GENOMIC DNA]</scope>
    <source>
        <strain>K12 / W3110 / ATCC 27325 / DSM 5911</strain>
    </source>
</reference>
<reference key="2">
    <citation type="journal article" date="1997" name="Science">
        <title>The complete genome sequence of Escherichia coli K-12.</title>
        <authorList>
            <person name="Blattner F.R."/>
            <person name="Plunkett G. III"/>
            <person name="Bloch C.A."/>
            <person name="Perna N.T."/>
            <person name="Burland V."/>
            <person name="Riley M."/>
            <person name="Collado-Vides J."/>
            <person name="Glasner J.D."/>
            <person name="Rode C.K."/>
            <person name="Mayhew G.F."/>
            <person name="Gregor J."/>
            <person name="Davis N.W."/>
            <person name="Kirkpatrick H.A."/>
            <person name="Goeden M.A."/>
            <person name="Rose D.J."/>
            <person name="Mau B."/>
            <person name="Shao Y."/>
        </authorList>
    </citation>
    <scope>NUCLEOTIDE SEQUENCE [LARGE SCALE GENOMIC DNA]</scope>
    <source>
        <strain>K12 / MG1655 / ATCC 47076</strain>
    </source>
</reference>
<reference key="3">
    <citation type="journal article" date="2006" name="Mol. Syst. Biol.">
        <title>Highly accurate genome sequences of Escherichia coli K-12 strains MG1655 and W3110.</title>
        <authorList>
            <person name="Hayashi K."/>
            <person name="Morooka N."/>
            <person name="Yamamoto Y."/>
            <person name="Fujita K."/>
            <person name="Isono K."/>
            <person name="Choi S."/>
            <person name="Ohtsubo E."/>
            <person name="Baba T."/>
            <person name="Wanner B.L."/>
            <person name="Mori H."/>
            <person name="Horiuchi T."/>
        </authorList>
    </citation>
    <scope>NUCLEOTIDE SEQUENCE [LARGE SCALE GENOMIC DNA]</scope>
    <source>
        <strain>K12 / W3110 / ATCC 27325 / DSM 5911</strain>
    </source>
</reference>
<gene>
    <name type="primary">ymfN</name>
    <name type="ordered locus">b1149</name>
    <name type="ordered locus">JW1135</name>
</gene>
<comment type="miscellaneous">
    <text evidence="1">Encoded by the e14 prophage.</text>
</comment>
<comment type="miscellaneous">
    <text evidence="1">Could be missing about 80 N-terminal residues compared to orthologs.</text>
</comment>
<comment type="similarity">
    <text evidence="1">Belongs to the phage terminase family.</text>
</comment>
<protein>
    <recommendedName>
        <fullName>Protein YmfN</fullName>
    </recommendedName>
</protein>
<accession>P75978</accession>
<accession>A0A385XMZ2</accession>
<name>YMFN_ECOLI</name>
<proteinExistence type="inferred from homology"/>
<evidence type="ECO:0000305" key="1"/>